<name>ALAA_SHIFL</name>
<sequence length="405" mass="45517">MSPIEKSSKLENVCYDIRGPVLKEAKRLEEEGNKVLKLNIGNPAPFGFDAPDEILVDVIRNLPTAQGYCDSKGLYSARKAIMQHYQARGMRDVTVEDIYIGNGVSELIVQAMQALLNSGDEMLVPAPDYPLWTAAVSLSSGKAVHYLCDESSDWFPDLDDIRAKITPRTRGIVIINPNNPTGAVYSKELLMEIVEIARQHNLIIFADEIYDKILYDDAEHHSIAPLAPDLLTITFNGLSKTYRVAGFRQGWMVLNGPKKHAKGYIEGLEMLASMRLCANVPAQHAIQTALGGYQSISEFITPGGRLYEQRNRAWELINDIPGVSCVKPRGALYMFPKIDAKRFNIHDDQKMVLDFLLQEKVLLVQGTAFNWPWPDHFRIVTLPRVDDIELSLSKFARFLSGYHQL</sequence>
<feature type="chain" id="PRO_0000123868" description="Glutamate-pyruvate aminotransferase AlaA">
    <location>
        <begin position="1"/>
        <end position="405"/>
    </location>
</feature>
<feature type="binding site" evidence="2">
    <location>
        <position position="41"/>
    </location>
    <ligand>
        <name>L-alanine</name>
        <dbReference type="ChEBI" id="CHEBI:57972"/>
    </ligand>
</feature>
<feature type="binding site" evidence="2">
    <location>
        <position position="179"/>
    </location>
    <ligand>
        <name>L-alanine</name>
        <dbReference type="ChEBI" id="CHEBI:57972"/>
    </ligand>
</feature>
<feature type="binding site" evidence="2">
    <location>
        <position position="378"/>
    </location>
    <ligand>
        <name>L-alanine</name>
        <dbReference type="ChEBI" id="CHEBI:57972"/>
    </ligand>
</feature>
<feature type="modified residue" description="N6-(pyridoxal phosphate)lysine" evidence="2">
    <location>
        <position position="240"/>
    </location>
</feature>
<comment type="function">
    <text evidence="2">Involved in the biosynthesis of alanine. Catalyzes the transamination of pyruvate by glutamate, leading to the formation of L-alanine and 2-oxoglutarate. Is also able to catalyze the reverse reaction.</text>
</comment>
<comment type="catalytic activity">
    <reaction evidence="2">
        <text>L-alanine + 2-oxoglutarate = pyruvate + L-glutamate</text>
        <dbReference type="Rhea" id="RHEA:19453"/>
        <dbReference type="ChEBI" id="CHEBI:15361"/>
        <dbReference type="ChEBI" id="CHEBI:16810"/>
        <dbReference type="ChEBI" id="CHEBI:29985"/>
        <dbReference type="ChEBI" id="CHEBI:57972"/>
        <dbReference type="EC" id="2.6.1.2"/>
    </reaction>
    <physiologicalReaction direction="right-to-left" evidence="2">
        <dbReference type="Rhea" id="RHEA:19455"/>
    </physiologicalReaction>
</comment>
<comment type="cofactor">
    <cofactor evidence="2">
        <name>pyridoxal 5'-phosphate</name>
        <dbReference type="ChEBI" id="CHEBI:597326"/>
    </cofactor>
</comment>
<comment type="pathway">
    <text evidence="2">Amino-acid biosynthesis; L-alanine biosynthesis.</text>
</comment>
<comment type="subunit">
    <text evidence="2">Homodimer.</text>
</comment>
<comment type="subcellular location">
    <subcellularLocation>
        <location evidence="1">Cytoplasm</location>
    </subcellularLocation>
</comment>
<comment type="similarity">
    <text evidence="3">Belongs to the class-I pyridoxal-phosphate-dependent aminotransferase family.</text>
</comment>
<gene>
    <name type="primary">alaA</name>
    <name type="synonym">yfbQ</name>
    <name type="ordered locus">SF2366</name>
    <name type="ordered locus">S2501</name>
</gene>
<keyword id="KW-0028">Amino-acid biosynthesis</keyword>
<keyword id="KW-0032">Aminotransferase</keyword>
<keyword id="KW-0963">Cytoplasm</keyword>
<keyword id="KW-0663">Pyridoxal phosphate</keyword>
<keyword id="KW-1185">Reference proteome</keyword>
<keyword id="KW-0808">Transferase</keyword>
<organism>
    <name type="scientific">Shigella flexneri</name>
    <dbReference type="NCBI Taxonomy" id="623"/>
    <lineage>
        <taxon>Bacteria</taxon>
        <taxon>Pseudomonadati</taxon>
        <taxon>Pseudomonadota</taxon>
        <taxon>Gammaproteobacteria</taxon>
        <taxon>Enterobacterales</taxon>
        <taxon>Enterobacteriaceae</taxon>
        <taxon>Shigella</taxon>
    </lineage>
</organism>
<protein>
    <recommendedName>
        <fullName>Glutamate-pyruvate aminotransferase AlaA</fullName>
        <ecNumber evidence="2">2.6.1.2</ecNumber>
    </recommendedName>
</protein>
<accession>P0A961</accession>
<accession>P77727</accession>
<evidence type="ECO:0000250" key="1"/>
<evidence type="ECO:0000250" key="2">
    <source>
        <dbReference type="UniProtKB" id="P0A959"/>
    </source>
</evidence>
<evidence type="ECO:0000305" key="3"/>
<reference key="1">
    <citation type="journal article" date="2002" name="Nucleic Acids Res.">
        <title>Genome sequence of Shigella flexneri 2a: insights into pathogenicity through comparison with genomes of Escherichia coli K12 and O157.</title>
        <authorList>
            <person name="Jin Q."/>
            <person name="Yuan Z."/>
            <person name="Xu J."/>
            <person name="Wang Y."/>
            <person name="Shen Y."/>
            <person name="Lu W."/>
            <person name="Wang J."/>
            <person name="Liu H."/>
            <person name="Yang J."/>
            <person name="Yang F."/>
            <person name="Zhang X."/>
            <person name="Zhang J."/>
            <person name="Yang G."/>
            <person name="Wu H."/>
            <person name="Qu D."/>
            <person name="Dong J."/>
            <person name="Sun L."/>
            <person name="Xue Y."/>
            <person name="Zhao A."/>
            <person name="Gao Y."/>
            <person name="Zhu J."/>
            <person name="Kan B."/>
            <person name="Ding K."/>
            <person name="Chen S."/>
            <person name="Cheng H."/>
            <person name="Yao Z."/>
            <person name="He B."/>
            <person name="Chen R."/>
            <person name="Ma D."/>
            <person name="Qiang B."/>
            <person name="Wen Y."/>
            <person name="Hou Y."/>
            <person name="Yu J."/>
        </authorList>
    </citation>
    <scope>NUCLEOTIDE SEQUENCE [LARGE SCALE GENOMIC DNA]</scope>
    <source>
        <strain>301 / Serotype 2a</strain>
    </source>
</reference>
<reference key="2">
    <citation type="journal article" date="2003" name="Infect. Immun.">
        <title>Complete genome sequence and comparative genomics of Shigella flexneri serotype 2a strain 2457T.</title>
        <authorList>
            <person name="Wei J."/>
            <person name="Goldberg M.B."/>
            <person name="Burland V."/>
            <person name="Venkatesan M.M."/>
            <person name="Deng W."/>
            <person name="Fournier G."/>
            <person name="Mayhew G.F."/>
            <person name="Plunkett G. III"/>
            <person name="Rose D.J."/>
            <person name="Darling A."/>
            <person name="Mau B."/>
            <person name="Perna N.T."/>
            <person name="Payne S.M."/>
            <person name="Runyen-Janecky L.J."/>
            <person name="Zhou S."/>
            <person name="Schwartz D.C."/>
            <person name="Blattner F.R."/>
        </authorList>
    </citation>
    <scope>NUCLEOTIDE SEQUENCE [LARGE SCALE GENOMIC DNA]</scope>
    <source>
        <strain>ATCC 700930 / 2457T / Serotype 2a</strain>
    </source>
</reference>
<proteinExistence type="inferred from homology"/>
<dbReference type="EC" id="2.6.1.2" evidence="2"/>
<dbReference type="EMBL" id="AE005674">
    <property type="protein sequence ID" value="AAN43879.1"/>
    <property type="molecule type" value="Genomic_DNA"/>
</dbReference>
<dbReference type="EMBL" id="AE014073">
    <property type="protein sequence ID" value="AAP17697.1"/>
    <property type="molecule type" value="Genomic_DNA"/>
</dbReference>
<dbReference type="RefSeq" id="NP_708172.1">
    <property type="nucleotide sequence ID" value="NC_004337.2"/>
</dbReference>
<dbReference type="RefSeq" id="WP_000074527.1">
    <property type="nucleotide sequence ID" value="NZ_WPGW01000016.1"/>
</dbReference>
<dbReference type="SMR" id="P0A961"/>
<dbReference type="STRING" id="198214.SF2366"/>
<dbReference type="PaxDb" id="198214-SF2366"/>
<dbReference type="GeneID" id="1027308"/>
<dbReference type="GeneID" id="93774884"/>
<dbReference type="KEGG" id="sfl:SF2366"/>
<dbReference type="KEGG" id="sfx:S2501"/>
<dbReference type="PATRIC" id="fig|198214.7.peg.2832"/>
<dbReference type="HOGENOM" id="CLU_017584_4_2_6"/>
<dbReference type="UniPathway" id="UPA00133"/>
<dbReference type="Proteomes" id="UP000001006">
    <property type="component" value="Chromosome"/>
</dbReference>
<dbReference type="Proteomes" id="UP000002673">
    <property type="component" value="Chromosome"/>
</dbReference>
<dbReference type="GO" id="GO:0005737">
    <property type="term" value="C:cytoplasm"/>
    <property type="evidence" value="ECO:0007669"/>
    <property type="project" value="UniProtKB-SubCell"/>
</dbReference>
<dbReference type="GO" id="GO:0004021">
    <property type="term" value="F:L-alanine:2-oxoglutarate aminotransferase activity"/>
    <property type="evidence" value="ECO:0007669"/>
    <property type="project" value="UniProtKB-EC"/>
</dbReference>
<dbReference type="GO" id="GO:0030170">
    <property type="term" value="F:pyridoxal phosphate binding"/>
    <property type="evidence" value="ECO:0007669"/>
    <property type="project" value="InterPro"/>
</dbReference>
<dbReference type="GO" id="GO:0030632">
    <property type="term" value="P:D-alanine biosynthetic process"/>
    <property type="evidence" value="ECO:0000250"/>
    <property type="project" value="UniProtKB"/>
</dbReference>
<dbReference type="CDD" id="cd00609">
    <property type="entry name" value="AAT_like"/>
    <property type="match status" value="1"/>
</dbReference>
<dbReference type="FunFam" id="3.40.640.10:FF:000019">
    <property type="entry name" value="Pyridoxal phosphate-dependent aminotransferase"/>
    <property type="match status" value="1"/>
</dbReference>
<dbReference type="Gene3D" id="3.90.1150.10">
    <property type="entry name" value="Aspartate Aminotransferase, domain 1"/>
    <property type="match status" value="1"/>
</dbReference>
<dbReference type="Gene3D" id="3.40.640.10">
    <property type="entry name" value="Type I PLP-dependent aspartate aminotransferase-like (Major domain)"/>
    <property type="match status" value="1"/>
</dbReference>
<dbReference type="InterPro" id="IPR051926">
    <property type="entry name" value="Ala_Aminotransferase"/>
</dbReference>
<dbReference type="InterPro" id="IPR004839">
    <property type="entry name" value="Aminotransferase_I/II_large"/>
</dbReference>
<dbReference type="InterPro" id="IPR015424">
    <property type="entry name" value="PyrdxlP-dep_Trfase"/>
</dbReference>
<dbReference type="InterPro" id="IPR015421">
    <property type="entry name" value="PyrdxlP-dep_Trfase_major"/>
</dbReference>
<dbReference type="InterPro" id="IPR015422">
    <property type="entry name" value="PyrdxlP-dep_Trfase_small"/>
</dbReference>
<dbReference type="PANTHER" id="PTHR43488">
    <property type="entry name" value="GLUTAMATE-PYRUVATE AMINOTRANSFERASE ALAA"/>
    <property type="match status" value="1"/>
</dbReference>
<dbReference type="PANTHER" id="PTHR43488:SF2">
    <property type="entry name" value="GLUTAMATE-PYRUVATE AMINOTRANSFERASE ALAA"/>
    <property type="match status" value="1"/>
</dbReference>
<dbReference type="Pfam" id="PF00155">
    <property type="entry name" value="Aminotran_1_2"/>
    <property type="match status" value="1"/>
</dbReference>
<dbReference type="SUPFAM" id="SSF53383">
    <property type="entry name" value="PLP-dependent transferases"/>
    <property type="match status" value="1"/>
</dbReference>